<gene>
    <name evidence="1" type="primary">rps5</name>
    <name type="ordered locus">PAE1182</name>
</gene>
<sequence>MRVKAKIFIRPLFATYVSVIDLSLWEPRTELGRMVKEGKIRTIDEIFANNYIIKEPEIVDILLPGLKQELLNVNLVQRQTHAGERNQFQAVVAVGNEDGYVGVGIGKARQVRQAIEKATREAKLNLVPVRRGCGSWKCSCDEPHSVPFVVRGKSGSVEITLIPAPKGVGLVAGDVAKAVLRLAGIKDVWTKTRGDTRTTLNFAMAVYNALRNTYYFKI</sequence>
<proteinExistence type="inferred from homology"/>
<evidence type="ECO:0000255" key="1">
    <source>
        <dbReference type="HAMAP-Rule" id="MF_01307"/>
    </source>
</evidence>
<evidence type="ECO:0000305" key="2"/>
<comment type="function">
    <text evidence="1">With S4 and S12 plays an important role in translational accuracy.</text>
</comment>
<comment type="subunit">
    <text evidence="1">Part of the 30S ribosomal subunit. Contacts protein S4.</text>
</comment>
<comment type="domain">
    <text>The N-terminal domain interacts with the head of the 30S subunit; the C-terminal domain interacts with the body and contacts protein S4. The interaction surface between S4 and S5 is involved in control of translational fidelity.</text>
</comment>
<comment type="similarity">
    <text evidence="1">Belongs to the universal ribosomal protein uS5 family.</text>
</comment>
<organism>
    <name type="scientific">Pyrobaculum aerophilum (strain ATCC 51768 / DSM 7523 / JCM 9630 / CIP 104966 / NBRC 100827 / IM2)</name>
    <dbReference type="NCBI Taxonomy" id="178306"/>
    <lineage>
        <taxon>Archaea</taxon>
        <taxon>Thermoproteota</taxon>
        <taxon>Thermoprotei</taxon>
        <taxon>Thermoproteales</taxon>
        <taxon>Thermoproteaceae</taxon>
        <taxon>Pyrobaculum</taxon>
    </lineage>
</organism>
<reference key="1">
    <citation type="journal article" date="2002" name="Proc. Natl. Acad. Sci. U.S.A.">
        <title>Genome sequence of the hyperthermophilic crenarchaeon Pyrobaculum aerophilum.</title>
        <authorList>
            <person name="Fitz-Gibbon S.T."/>
            <person name="Ladner H."/>
            <person name="Kim U.-J."/>
            <person name="Stetter K.O."/>
            <person name="Simon M.I."/>
            <person name="Miller J.H."/>
        </authorList>
    </citation>
    <scope>NUCLEOTIDE SEQUENCE [LARGE SCALE GENOMIC DNA]</scope>
    <source>
        <strain>ATCC 51768 / DSM 7523 / JCM 9630 / CIP 104966 / NBRC 100827 / IM2</strain>
    </source>
</reference>
<dbReference type="EMBL" id="AE009441">
    <property type="protein sequence ID" value="AAL63307.1"/>
    <property type="molecule type" value="Genomic_DNA"/>
</dbReference>
<dbReference type="SMR" id="Q8ZXN9"/>
<dbReference type="FunCoup" id="Q8ZXN9">
    <property type="interactions" value="225"/>
</dbReference>
<dbReference type="STRING" id="178306.PAE1182"/>
<dbReference type="EnsemblBacteria" id="AAL63307">
    <property type="protein sequence ID" value="AAL63307"/>
    <property type="gene ID" value="PAE1182"/>
</dbReference>
<dbReference type="KEGG" id="pai:PAE1182"/>
<dbReference type="PATRIC" id="fig|178306.9.peg.873"/>
<dbReference type="eggNOG" id="arCOG04087">
    <property type="taxonomic scope" value="Archaea"/>
</dbReference>
<dbReference type="HOGENOM" id="CLU_065898_0_1_2"/>
<dbReference type="InParanoid" id="Q8ZXN9"/>
<dbReference type="Proteomes" id="UP000002439">
    <property type="component" value="Chromosome"/>
</dbReference>
<dbReference type="GO" id="GO:0022627">
    <property type="term" value="C:cytosolic small ribosomal subunit"/>
    <property type="evidence" value="ECO:0000318"/>
    <property type="project" value="GO_Central"/>
</dbReference>
<dbReference type="GO" id="GO:0019843">
    <property type="term" value="F:rRNA binding"/>
    <property type="evidence" value="ECO:0007669"/>
    <property type="project" value="UniProtKB-UniRule"/>
</dbReference>
<dbReference type="GO" id="GO:0003735">
    <property type="term" value="F:structural constituent of ribosome"/>
    <property type="evidence" value="ECO:0000318"/>
    <property type="project" value="GO_Central"/>
</dbReference>
<dbReference type="GO" id="GO:0006412">
    <property type="term" value="P:translation"/>
    <property type="evidence" value="ECO:0000318"/>
    <property type="project" value="GO_Central"/>
</dbReference>
<dbReference type="FunFam" id="3.30.160.20:FF:000002">
    <property type="entry name" value="40S ribosomal protein S2"/>
    <property type="match status" value="1"/>
</dbReference>
<dbReference type="FunFam" id="3.30.230.10:FF:000004">
    <property type="entry name" value="40S ribosomal protein S2"/>
    <property type="match status" value="1"/>
</dbReference>
<dbReference type="Gene3D" id="3.30.160.20">
    <property type="match status" value="1"/>
</dbReference>
<dbReference type="Gene3D" id="3.30.230.10">
    <property type="match status" value="1"/>
</dbReference>
<dbReference type="HAMAP" id="MF_01307_A">
    <property type="entry name" value="Ribosomal_uS5_A"/>
    <property type="match status" value="1"/>
</dbReference>
<dbReference type="InterPro" id="IPR020568">
    <property type="entry name" value="Ribosomal_Su5_D2-typ_SF"/>
</dbReference>
<dbReference type="InterPro" id="IPR000851">
    <property type="entry name" value="Ribosomal_uS5"/>
</dbReference>
<dbReference type="InterPro" id="IPR047866">
    <property type="entry name" value="Ribosomal_uS5_arc"/>
</dbReference>
<dbReference type="InterPro" id="IPR005324">
    <property type="entry name" value="Ribosomal_uS5_C"/>
</dbReference>
<dbReference type="InterPro" id="IPR005711">
    <property type="entry name" value="Ribosomal_uS5_euk/arc"/>
</dbReference>
<dbReference type="InterPro" id="IPR013810">
    <property type="entry name" value="Ribosomal_uS5_N"/>
</dbReference>
<dbReference type="InterPro" id="IPR018192">
    <property type="entry name" value="Ribosomal_uS5_N_CS"/>
</dbReference>
<dbReference type="InterPro" id="IPR014721">
    <property type="entry name" value="Ribsml_uS5_D2-typ_fold_subgr"/>
</dbReference>
<dbReference type="NCBIfam" id="NF003125">
    <property type="entry name" value="PRK04044.1"/>
    <property type="match status" value="1"/>
</dbReference>
<dbReference type="NCBIfam" id="TIGR01020">
    <property type="entry name" value="uS5_euk_arch"/>
    <property type="match status" value="1"/>
</dbReference>
<dbReference type="PANTHER" id="PTHR13718:SF4">
    <property type="entry name" value="40S RIBOSOMAL PROTEIN S2"/>
    <property type="match status" value="1"/>
</dbReference>
<dbReference type="PANTHER" id="PTHR13718">
    <property type="entry name" value="RIBOSOMAL S SUBUNIT"/>
    <property type="match status" value="1"/>
</dbReference>
<dbReference type="Pfam" id="PF00333">
    <property type="entry name" value="Ribosomal_S5"/>
    <property type="match status" value="1"/>
</dbReference>
<dbReference type="Pfam" id="PF03719">
    <property type="entry name" value="Ribosomal_S5_C"/>
    <property type="match status" value="1"/>
</dbReference>
<dbReference type="SUPFAM" id="SSF54768">
    <property type="entry name" value="dsRNA-binding domain-like"/>
    <property type="match status" value="1"/>
</dbReference>
<dbReference type="SUPFAM" id="SSF54211">
    <property type="entry name" value="Ribosomal protein S5 domain 2-like"/>
    <property type="match status" value="1"/>
</dbReference>
<dbReference type="PROSITE" id="PS00585">
    <property type="entry name" value="RIBOSOMAL_S5"/>
    <property type="match status" value="1"/>
</dbReference>
<dbReference type="PROSITE" id="PS50881">
    <property type="entry name" value="S5_DSRBD"/>
    <property type="match status" value="1"/>
</dbReference>
<accession>Q8ZXN9</accession>
<protein>
    <recommendedName>
        <fullName evidence="1">Small ribosomal subunit protein uS5</fullName>
    </recommendedName>
    <alternativeName>
        <fullName evidence="2">30S ribosomal protein S5</fullName>
    </alternativeName>
</protein>
<feature type="chain" id="PRO_0000131656" description="Small ribosomal subunit protein uS5">
    <location>
        <begin position="1"/>
        <end position="218"/>
    </location>
</feature>
<feature type="domain" description="S5 DRBM" evidence="1">
    <location>
        <begin position="66"/>
        <end position="129"/>
    </location>
</feature>
<name>RS5_PYRAE</name>
<keyword id="KW-1185">Reference proteome</keyword>
<keyword id="KW-0687">Ribonucleoprotein</keyword>
<keyword id="KW-0689">Ribosomal protein</keyword>
<keyword id="KW-0694">RNA-binding</keyword>
<keyword id="KW-0699">rRNA-binding</keyword>